<proteinExistence type="inferred from homology"/>
<gene>
    <name evidence="1" type="primary">rsmH</name>
    <name type="synonym">mraW</name>
    <name type="ordered locus">CPF_2119</name>
</gene>
<sequence>MEFKHVSVLLDECINALNIKEDGIYVDCTLGGAGHSSEIVKRLSSDGRLIGFDQDKDALKAAGERLKDYKNVTYVHSNFYAIYDVLTDLGIDGVDGILMDLGVSSYQLDNGERGFSYMQDAPLDMRMNRENEFSAYEIVNTYSEEELYRIIKEYGEEKFAKRIASFIVKNREEKNIETTLELVEIIKAAIPAKARREGPHPAKRTFQAIRIEVNKELEIISKTILDGVKKLNKGGRMAIITFHSLEDRIVKNTFKELANPCTCPSEFPVCVCNRKPEVKLISRKPIEASKEELEFNPRSRSAKLRIIEKL</sequence>
<dbReference type="EC" id="2.1.1.199" evidence="1"/>
<dbReference type="EMBL" id="CP000246">
    <property type="protein sequence ID" value="ABG84157.1"/>
    <property type="molecule type" value="Genomic_DNA"/>
</dbReference>
<dbReference type="RefSeq" id="WP_003451137.1">
    <property type="nucleotide sequence ID" value="NC_008261.1"/>
</dbReference>
<dbReference type="SMR" id="Q0TP92"/>
<dbReference type="STRING" id="195103.CPF_2119"/>
<dbReference type="PaxDb" id="195103-CPF_2119"/>
<dbReference type="GeneID" id="93001600"/>
<dbReference type="KEGG" id="cpf:CPF_2119"/>
<dbReference type="eggNOG" id="COG0275">
    <property type="taxonomic scope" value="Bacteria"/>
</dbReference>
<dbReference type="HOGENOM" id="CLU_038422_2_0_9"/>
<dbReference type="Proteomes" id="UP000001823">
    <property type="component" value="Chromosome"/>
</dbReference>
<dbReference type="GO" id="GO:0005737">
    <property type="term" value="C:cytoplasm"/>
    <property type="evidence" value="ECO:0007669"/>
    <property type="project" value="UniProtKB-SubCell"/>
</dbReference>
<dbReference type="GO" id="GO:0071424">
    <property type="term" value="F:rRNA (cytosine-N4-)-methyltransferase activity"/>
    <property type="evidence" value="ECO:0007669"/>
    <property type="project" value="UniProtKB-UniRule"/>
</dbReference>
<dbReference type="GO" id="GO:0070475">
    <property type="term" value="P:rRNA base methylation"/>
    <property type="evidence" value="ECO:0007669"/>
    <property type="project" value="UniProtKB-UniRule"/>
</dbReference>
<dbReference type="FunFam" id="1.10.150.170:FF:000001">
    <property type="entry name" value="Ribosomal RNA small subunit methyltransferase H"/>
    <property type="match status" value="1"/>
</dbReference>
<dbReference type="Gene3D" id="1.10.150.170">
    <property type="entry name" value="Putative methyltransferase TM0872, insert domain"/>
    <property type="match status" value="1"/>
</dbReference>
<dbReference type="Gene3D" id="3.40.50.150">
    <property type="entry name" value="Vaccinia Virus protein VP39"/>
    <property type="match status" value="1"/>
</dbReference>
<dbReference type="HAMAP" id="MF_01007">
    <property type="entry name" value="16SrRNA_methyltr_H"/>
    <property type="match status" value="1"/>
</dbReference>
<dbReference type="InterPro" id="IPR002903">
    <property type="entry name" value="RsmH"/>
</dbReference>
<dbReference type="InterPro" id="IPR023397">
    <property type="entry name" value="SAM-dep_MeTrfase_MraW_recog"/>
</dbReference>
<dbReference type="InterPro" id="IPR029063">
    <property type="entry name" value="SAM-dependent_MTases_sf"/>
</dbReference>
<dbReference type="NCBIfam" id="TIGR00006">
    <property type="entry name" value="16S rRNA (cytosine(1402)-N(4))-methyltransferase RsmH"/>
    <property type="match status" value="1"/>
</dbReference>
<dbReference type="PANTHER" id="PTHR11265:SF0">
    <property type="entry name" value="12S RRNA N4-METHYLCYTIDINE METHYLTRANSFERASE"/>
    <property type="match status" value="1"/>
</dbReference>
<dbReference type="PANTHER" id="PTHR11265">
    <property type="entry name" value="S-ADENOSYL-METHYLTRANSFERASE MRAW"/>
    <property type="match status" value="1"/>
</dbReference>
<dbReference type="Pfam" id="PF01795">
    <property type="entry name" value="Methyltransf_5"/>
    <property type="match status" value="1"/>
</dbReference>
<dbReference type="PIRSF" id="PIRSF004486">
    <property type="entry name" value="MraW"/>
    <property type="match status" value="1"/>
</dbReference>
<dbReference type="SUPFAM" id="SSF81799">
    <property type="entry name" value="Putative methyltransferase TM0872, insert domain"/>
    <property type="match status" value="1"/>
</dbReference>
<dbReference type="SUPFAM" id="SSF53335">
    <property type="entry name" value="S-adenosyl-L-methionine-dependent methyltransferases"/>
    <property type="match status" value="1"/>
</dbReference>
<comment type="function">
    <text evidence="1">Specifically methylates the N4 position of cytidine in position 1402 (C1402) of 16S rRNA.</text>
</comment>
<comment type="catalytic activity">
    <reaction evidence="1">
        <text>cytidine(1402) in 16S rRNA + S-adenosyl-L-methionine = N(4)-methylcytidine(1402) in 16S rRNA + S-adenosyl-L-homocysteine + H(+)</text>
        <dbReference type="Rhea" id="RHEA:42928"/>
        <dbReference type="Rhea" id="RHEA-COMP:10286"/>
        <dbReference type="Rhea" id="RHEA-COMP:10287"/>
        <dbReference type="ChEBI" id="CHEBI:15378"/>
        <dbReference type="ChEBI" id="CHEBI:57856"/>
        <dbReference type="ChEBI" id="CHEBI:59789"/>
        <dbReference type="ChEBI" id="CHEBI:74506"/>
        <dbReference type="ChEBI" id="CHEBI:82748"/>
        <dbReference type="EC" id="2.1.1.199"/>
    </reaction>
</comment>
<comment type="subcellular location">
    <subcellularLocation>
        <location evidence="1">Cytoplasm</location>
    </subcellularLocation>
</comment>
<comment type="similarity">
    <text evidence="1">Belongs to the methyltransferase superfamily. RsmH family.</text>
</comment>
<organism>
    <name type="scientific">Clostridium perfringens (strain ATCC 13124 / DSM 756 / JCM 1290 / NCIMB 6125 / NCTC 8237 / Type A)</name>
    <dbReference type="NCBI Taxonomy" id="195103"/>
    <lineage>
        <taxon>Bacteria</taxon>
        <taxon>Bacillati</taxon>
        <taxon>Bacillota</taxon>
        <taxon>Clostridia</taxon>
        <taxon>Eubacteriales</taxon>
        <taxon>Clostridiaceae</taxon>
        <taxon>Clostridium</taxon>
    </lineage>
</organism>
<name>RSMH_CLOP1</name>
<reference key="1">
    <citation type="journal article" date="2006" name="Genome Res.">
        <title>Skewed genomic variability in strains of the toxigenic bacterial pathogen, Clostridium perfringens.</title>
        <authorList>
            <person name="Myers G.S.A."/>
            <person name="Rasko D.A."/>
            <person name="Cheung J.K."/>
            <person name="Ravel J."/>
            <person name="Seshadri R."/>
            <person name="DeBoy R.T."/>
            <person name="Ren Q."/>
            <person name="Varga J."/>
            <person name="Awad M.M."/>
            <person name="Brinkac L.M."/>
            <person name="Daugherty S.C."/>
            <person name="Haft D.H."/>
            <person name="Dodson R.J."/>
            <person name="Madupu R."/>
            <person name="Nelson W.C."/>
            <person name="Rosovitz M.J."/>
            <person name="Sullivan S.A."/>
            <person name="Khouri H."/>
            <person name="Dimitrov G.I."/>
            <person name="Watkins K.L."/>
            <person name="Mulligan S."/>
            <person name="Benton J."/>
            <person name="Radune D."/>
            <person name="Fisher D.J."/>
            <person name="Atkins H.S."/>
            <person name="Hiscox T."/>
            <person name="Jost B.H."/>
            <person name="Billington S.J."/>
            <person name="Songer J.G."/>
            <person name="McClane B.A."/>
            <person name="Titball R.W."/>
            <person name="Rood J.I."/>
            <person name="Melville S.B."/>
            <person name="Paulsen I.T."/>
        </authorList>
    </citation>
    <scope>NUCLEOTIDE SEQUENCE [LARGE SCALE GENOMIC DNA]</scope>
    <source>
        <strain>ATCC 13124 / DSM 756 / JCM 1290 / NCIMB 6125 / NCTC 8237 / S 107 / Type A</strain>
    </source>
</reference>
<evidence type="ECO:0000255" key="1">
    <source>
        <dbReference type="HAMAP-Rule" id="MF_01007"/>
    </source>
</evidence>
<protein>
    <recommendedName>
        <fullName evidence="1">Ribosomal RNA small subunit methyltransferase H</fullName>
        <ecNumber evidence="1">2.1.1.199</ecNumber>
    </recommendedName>
    <alternativeName>
        <fullName evidence="1">16S rRNA m(4)C1402 methyltransferase</fullName>
    </alternativeName>
    <alternativeName>
        <fullName evidence="1">rRNA (cytosine-N(4)-)-methyltransferase RsmH</fullName>
    </alternativeName>
</protein>
<accession>Q0TP92</accession>
<feature type="chain" id="PRO_1000062823" description="Ribosomal RNA small subunit methyltransferase H">
    <location>
        <begin position="1"/>
        <end position="310"/>
    </location>
</feature>
<feature type="binding site" evidence="1">
    <location>
        <begin position="33"/>
        <end position="35"/>
    </location>
    <ligand>
        <name>S-adenosyl-L-methionine</name>
        <dbReference type="ChEBI" id="CHEBI:59789"/>
    </ligand>
</feature>
<feature type="binding site" evidence="1">
    <location>
        <position position="53"/>
    </location>
    <ligand>
        <name>S-adenosyl-L-methionine</name>
        <dbReference type="ChEBI" id="CHEBI:59789"/>
    </ligand>
</feature>
<feature type="binding site" evidence="1">
    <location>
        <position position="83"/>
    </location>
    <ligand>
        <name>S-adenosyl-L-methionine</name>
        <dbReference type="ChEBI" id="CHEBI:59789"/>
    </ligand>
</feature>
<feature type="binding site" evidence="1">
    <location>
        <position position="100"/>
    </location>
    <ligand>
        <name>S-adenosyl-L-methionine</name>
        <dbReference type="ChEBI" id="CHEBI:59789"/>
    </ligand>
</feature>
<feature type="binding site" evidence="1">
    <location>
        <position position="107"/>
    </location>
    <ligand>
        <name>S-adenosyl-L-methionine</name>
        <dbReference type="ChEBI" id="CHEBI:59789"/>
    </ligand>
</feature>
<keyword id="KW-0963">Cytoplasm</keyword>
<keyword id="KW-0489">Methyltransferase</keyword>
<keyword id="KW-0698">rRNA processing</keyword>
<keyword id="KW-0949">S-adenosyl-L-methionine</keyword>
<keyword id="KW-0808">Transferase</keyword>